<name>GLYA_BORHD</name>
<protein>
    <recommendedName>
        <fullName evidence="1">Serine hydroxymethyltransferase</fullName>
        <shortName evidence="1">SHMT</shortName>
        <shortName evidence="1">Serine methylase</shortName>
        <ecNumber evidence="1">2.1.2.1</ecNumber>
    </recommendedName>
</protein>
<comment type="function">
    <text evidence="1">Catalyzes the reversible interconversion of serine and glycine with tetrahydrofolate (THF) serving as the one-carbon carrier. This reaction serves as the major source of one-carbon groups required for the biosynthesis of purines, thymidylate, methionine, and other important biomolecules. Also exhibits THF-independent aldolase activity toward beta-hydroxyamino acids, producing glycine and aldehydes, via a retro-aldol mechanism.</text>
</comment>
<comment type="catalytic activity">
    <reaction evidence="1">
        <text>(6R)-5,10-methylene-5,6,7,8-tetrahydrofolate + glycine + H2O = (6S)-5,6,7,8-tetrahydrofolate + L-serine</text>
        <dbReference type="Rhea" id="RHEA:15481"/>
        <dbReference type="ChEBI" id="CHEBI:15377"/>
        <dbReference type="ChEBI" id="CHEBI:15636"/>
        <dbReference type="ChEBI" id="CHEBI:33384"/>
        <dbReference type="ChEBI" id="CHEBI:57305"/>
        <dbReference type="ChEBI" id="CHEBI:57453"/>
        <dbReference type="EC" id="2.1.2.1"/>
    </reaction>
</comment>
<comment type="cofactor">
    <cofactor evidence="1">
        <name>pyridoxal 5'-phosphate</name>
        <dbReference type="ChEBI" id="CHEBI:597326"/>
    </cofactor>
</comment>
<comment type="pathway">
    <text evidence="1">One-carbon metabolism; tetrahydrofolate interconversion.</text>
</comment>
<comment type="pathway">
    <text evidence="1">Amino-acid biosynthesis; glycine biosynthesis; glycine from L-serine: step 1/1.</text>
</comment>
<comment type="subunit">
    <text evidence="1">Homodimer.</text>
</comment>
<comment type="subcellular location">
    <subcellularLocation>
        <location evidence="1">Cytoplasm</location>
    </subcellularLocation>
</comment>
<comment type="similarity">
    <text evidence="1">Belongs to the SHMT family.</text>
</comment>
<accession>B2S0U9</accession>
<sequence>MIDSILFDLIEREVKREKENIELIASENFVSSDVRRAVGSILTNKYAEGYPSKRYYGGCFVVDDIESLAISRARELFGANYANVQPHSGSQANMAAIMALIKPGDRILGMELSHGGHLTHGSKVSFSGMFFDAYSYGVSRESEMIDYDDVRKIAKECRPNLIIAGASSYSREIDFKKFREIADEVSAYLLCDVAHTAGLIATGFHNSPIDVAHLTTSTTHKTLRGPRGGLILAGRESSIIVNYNNKERRLEDAVNSCVFPGTQGGPLMHVIAGKAVAFREALMEDFKDYISRVISNTKAMAECFISEGFRIVSGGTDNHLFLVDLGILGITGADAEKVLERVNITLNKNAIPFDSKNPSVTSGIRIGAAAITSRGLNRDDSIRVAHFVIRALKTKSEDELKKIKRDVIEFISSFDMP</sequence>
<dbReference type="EC" id="2.1.2.1" evidence="1"/>
<dbReference type="EMBL" id="CP000048">
    <property type="protein sequence ID" value="AAX17105.1"/>
    <property type="molecule type" value="Genomic_DNA"/>
</dbReference>
<dbReference type="RefSeq" id="WP_012422356.1">
    <property type="nucleotide sequence ID" value="NZ_CP073136.1"/>
</dbReference>
<dbReference type="SMR" id="B2S0U9"/>
<dbReference type="KEGG" id="bhr:BH0601"/>
<dbReference type="HOGENOM" id="CLU_022477_2_1_12"/>
<dbReference type="UniPathway" id="UPA00193"/>
<dbReference type="UniPathway" id="UPA00288">
    <property type="reaction ID" value="UER01023"/>
</dbReference>
<dbReference type="Proteomes" id="UP000008834">
    <property type="component" value="Chromosome"/>
</dbReference>
<dbReference type="GO" id="GO:0005829">
    <property type="term" value="C:cytosol"/>
    <property type="evidence" value="ECO:0007669"/>
    <property type="project" value="TreeGrafter"/>
</dbReference>
<dbReference type="GO" id="GO:0004372">
    <property type="term" value="F:glycine hydroxymethyltransferase activity"/>
    <property type="evidence" value="ECO:0007669"/>
    <property type="project" value="UniProtKB-UniRule"/>
</dbReference>
<dbReference type="GO" id="GO:0030170">
    <property type="term" value="F:pyridoxal phosphate binding"/>
    <property type="evidence" value="ECO:0007669"/>
    <property type="project" value="UniProtKB-UniRule"/>
</dbReference>
<dbReference type="GO" id="GO:0019264">
    <property type="term" value="P:glycine biosynthetic process from serine"/>
    <property type="evidence" value="ECO:0007669"/>
    <property type="project" value="UniProtKB-UniRule"/>
</dbReference>
<dbReference type="GO" id="GO:0035999">
    <property type="term" value="P:tetrahydrofolate interconversion"/>
    <property type="evidence" value="ECO:0007669"/>
    <property type="project" value="UniProtKB-UniRule"/>
</dbReference>
<dbReference type="CDD" id="cd00378">
    <property type="entry name" value="SHMT"/>
    <property type="match status" value="1"/>
</dbReference>
<dbReference type="FunFam" id="3.40.640.10:FF:000001">
    <property type="entry name" value="Serine hydroxymethyltransferase"/>
    <property type="match status" value="1"/>
</dbReference>
<dbReference type="Gene3D" id="3.90.1150.10">
    <property type="entry name" value="Aspartate Aminotransferase, domain 1"/>
    <property type="match status" value="1"/>
</dbReference>
<dbReference type="Gene3D" id="3.40.640.10">
    <property type="entry name" value="Type I PLP-dependent aspartate aminotransferase-like (Major domain)"/>
    <property type="match status" value="1"/>
</dbReference>
<dbReference type="HAMAP" id="MF_00051">
    <property type="entry name" value="SHMT"/>
    <property type="match status" value="1"/>
</dbReference>
<dbReference type="InterPro" id="IPR015424">
    <property type="entry name" value="PyrdxlP-dep_Trfase"/>
</dbReference>
<dbReference type="InterPro" id="IPR015421">
    <property type="entry name" value="PyrdxlP-dep_Trfase_major"/>
</dbReference>
<dbReference type="InterPro" id="IPR015422">
    <property type="entry name" value="PyrdxlP-dep_Trfase_small"/>
</dbReference>
<dbReference type="InterPro" id="IPR001085">
    <property type="entry name" value="Ser_HO-MeTrfase"/>
</dbReference>
<dbReference type="InterPro" id="IPR049943">
    <property type="entry name" value="Ser_HO-MeTrfase-like"/>
</dbReference>
<dbReference type="InterPro" id="IPR019798">
    <property type="entry name" value="Ser_HO-MeTrfase_PLP_BS"/>
</dbReference>
<dbReference type="InterPro" id="IPR039429">
    <property type="entry name" value="SHMT-like_dom"/>
</dbReference>
<dbReference type="NCBIfam" id="NF000586">
    <property type="entry name" value="PRK00011.1"/>
    <property type="match status" value="1"/>
</dbReference>
<dbReference type="PANTHER" id="PTHR11680">
    <property type="entry name" value="SERINE HYDROXYMETHYLTRANSFERASE"/>
    <property type="match status" value="1"/>
</dbReference>
<dbReference type="PANTHER" id="PTHR11680:SF35">
    <property type="entry name" value="SERINE HYDROXYMETHYLTRANSFERASE 1"/>
    <property type="match status" value="1"/>
</dbReference>
<dbReference type="Pfam" id="PF00464">
    <property type="entry name" value="SHMT"/>
    <property type="match status" value="1"/>
</dbReference>
<dbReference type="PIRSF" id="PIRSF000412">
    <property type="entry name" value="SHMT"/>
    <property type="match status" value="1"/>
</dbReference>
<dbReference type="SUPFAM" id="SSF53383">
    <property type="entry name" value="PLP-dependent transferases"/>
    <property type="match status" value="1"/>
</dbReference>
<dbReference type="PROSITE" id="PS00096">
    <property type="entry name" value="SHMT"/>
    <property type="match status" value="1"/>
</dbReference>
<proteinExistence type="inferred from homology"/>
<gene>
    <name evidence="1" type="primary">glyA</name>
    <name type="ordered locus">BH0601</name>
</gene>
<evidence type="ECO:0000255" key="1">
    <source>
        <dbReference type="HAMAP-Rule" id="MF_00051"/>
    </source>
</evidence>
<keyword id="KW-0028">Amino-acid biosynthesis</keyword>
<keyword id="KW-0963">Cytoplasm</keyword>
<keyword id="KW-0554">One-carbon metabolism</keyword>
<keyword id="KW-0663">Pyridoxal phosphate</keyword>
<keyword id="KW-0808">Transferase</keyword>
<organism>
    <name type="scientific">Borrelia hermsii (strain HS1 / DAH)</name>
    <dbReference type="NCBI Taxonomy" id="314723"/>
    <lineage>
        <taxon>Bacteria</taxon>
        <taxon>Pseudomonadati</taxon>
        <taxon>Spirochaetota</taxon>
        <taxon>Spirochaetia</taxon>
        <taxon>Spirochaetales</taxon>
        <taxon>Borreliaceae</taxon>
        <taxon>Borrelia</taxon>
    </lineage>
</organism>
<feature type="chain" id="PRO_1000091520" description="Serine hydroxymethyltransferase">
    <location>
        <begin position="1"/>
        <end position="417"/>
    </location>
</feature>
<feature type="binding site" evidence="1">
    <location>
        <position position="112"/>
    </location>
    <ligand>
        <name>(6S)-5,6,7,8-tetrahydrofolate</name>
        <dbReference type="ChEBI" id="CHEBI:57453"/>
    </ligand>
</feature>
<feature type="binding site" evidence="1">
    <location>
        <begin position="116"/>
        <end position="118"/>
    </location>
    <ligand>
        <name>(6S)-5,6,7,8-tetrahydrofolate</name>
        <dbReference type="ChEBI" id="CHEBI:57453"/>
    </ligand>
</feature>
<feature type="binding site" evidence="1">
    <location>
        <position position="247"/>
    </location>
    <ligand>
        <name>(6S)-5,6,7,8-tetrahydrofolate</name>
        <dbReference type="ChEBI" id="CHEBI:57453"/>
    </ligand>
</feature>
<feature type="site" description="Plays an important role in substrate specificity" evidence="1">
    <location>
        <position position="220"/>
    </location>
</feature>
<feature type="modified residue" description="N6-(pyridoxal phosphate)lysine" evidence="1">
    <location>
        <position position="221"/>
    </location>
</feature>
<reference key="1">
    <citation type="submission" date="2004-12" db="EMBL/GenBank/DDBJ databases">
        <title>The genome sequence of Borrelia hermsii and Borrelia turicatae: comparative analysis of two agents of endemic N. America relapsing fever.</title>
        <authorList>
            <person name="Porcella S.F."/>
            <person name="Raffel S.J."/>
            <person name="Schrumpf M.E."/>
            <person name="Montgomery B."/>
            <person name="Smith T."/>
            <person name="Schwan T.G."/>
        </authorList>
    </citation>
    <scope>NUCLEOTIDE SEQUENCE [LARGE SCALE GENOMIC DNA]</scope>
    <source>
        <strain>HS1 / DAH</strain>
    </source>
</reference>